<evidence type="ECO:0000255" key="1">
    <source>
        <dbReference type="HAMAP-Rule" id="MF_01382"/>
    </source>
</evidence>
<evidence type="ECO:0000256" key="2">
    <source>
        <dbReference type="SAM" id="MobiDB-lite"/>
    </source>
</evidence>
<gene>
    <name evidence="1" type="primary">secA1</name>
    <name type="ordered locus">SA0708</name>
</gene>
<proteinExistence type="evidence at protein level"/>
<keyword id="KW-0067">ATP-binding</keyword>
<keyword id="KW-1003">Cell membrane</keyword>
<keyword id="KW-0963">Cytoplasm</keyword>
<keyword id="KW-0472">Membrane</keyword>
<keyword id="KW-0479">Metal-binding</keyword>
<keyword id="KW-0547">Nucleotide-binding</keyword>
<keyword id="KW-0653">Protein transport</keyword>
<keyword id="KW-1278">Translocase</keyword>
<keyword id="KW-0811">Translocation</keyword>
<keyword id="KW-0813">Transport</keyword>
<keyword id="KW-0862">Zinc</keyword>
<dbReference type="EC" id="7.4.2.8" evidence="1"/>
<dbReference type="EMBL" id="BA000018">
    <property type="protein sequence ID" value="BAB41941.1"/>
    <property type="molecule type" value="Genomic_DNA"/>
</dbReference>
<dbReference type="PIR" id="B89848">
    <property type="entry name" value="B89848"/>
</dbReference>
<dbReference type="SMR" id="Q7A6R5"/>
<dbReference type="EnsemblBacteria" id="BAB41941">
    <property type="protein sequence ID" value="BAB41941"/>
    <property type="gene ID" value="BAB41941"/>
</dbReference>
<dbReference type="KEGG" id="sau:SA0708"/>
<dbReference type="HOGENOM" id="CLU_005314_3_0_9"/>
<dbReference type="GO" id="GO:0031522">
    <property type="term" value="C:cell envelope Sec protein transport complex"/>
    <property type="evidence" value="ECO:0007669"/>
    <property type="project" value="TreeGrafter"/>
</dbReference>
<dbReference type="GO" id="GO:0005829">
    <property type="term" value="C:cytosol"/>
    <property type="evidence" value="ECO:0007669"/>
    <property type="project" value="TreeGrafter"/>
</dbReference>
<dbReference type="GO" id="GO:0005886">
    <property type="term" value="C:plasma membrane"/>
    <property type="evidence" value="ECO:0007669"/>
    <property type="project" value="UniProtKB-SubCell"/>
</dbReference>
<dbReference type="GO" id="GO:0005524">
    <property type="term" value="F:ATP binding"/>
    <property type="evidence" value="ECO:0007669"/>
    <property type="project" value="UniProtKB-UniRule"/>
</dbReference>
<dbReference type="GO" id="GO:0046872">
    <property type="term" value="F:metal ion binding"/>
    <property type="evidence" value="ECO:0007669"/>
    <property type="project" value="UniProtKB-KW"/>
</dbReference>
<dbReference type="GO" id="GO:0008564">
    <property type="term" value="F:protein-exporting ATPase activity"/>
    <property type="evidence" value="ECO:0007669"/>
    <property type="project" value="UniProtKB-EC"/>
</dbReference>
<dbReference type="GO" id="GO:0065002">
    <property type="term" value="P:intracellular protein transmembrane transport"/>
    <property type="evidence" value="ECO:0007669"/>
    <property type="project" value="UniProtKB-UniRule"/>
</dbReference>
<dbReference type="GO" id="GO:0017038">
    <property type="term" value="P:protein import"/>
    <property type="evidence" value="ECO:0007669"/>
    <property type="project" value="InterPro"/>
</dbReference>
<dbReference type="GO" id="GO:0006605">
    <property type="term" value="P:protein targeting"/>
    <property type="evidence" value="ECO:0007669"/>
    <property type="project" value="UniProtKB-UniRule"/>
</dbReference>
<dbReference type="GO" id="GO:0043952">
    <property type="term" value="P:protein transport by the Sec complex"/>
    <property type="evidence" value="ECO:0007669"/>
    <property type="project" value="TreeGrafter"/>
</dbReference>
<dbReference type="CDD" id="cd17928">
    <property type="entry name" value="DEXDc_SecA"/>
    <property type="match status" value="1"/>
</dbReference>
<dbReference type="CDD" id="cd18803">
    <property type="entry name" value="SF2_C_secA"/>
    <property type="match status" value="1"/>
</dbReference>
<dbReference type="FunFam" id="3.40.50.300:FF:000694">
    <property type="entry name" value="Preprotein translocase subunit SecA"/>
    <property type="match status" value="1"/>
</dbReference>
<dbReference type="FunFam" id="3.90.1440.10:FF:000002">
    <property type="entry name" value="Protein translocase subunit SecA"/>
    <property type="match status" value="1"/>
</dbReference>
<dbReference type="Gene3D" id="1.10.3060.10">
    <property type="entry name" value="Helical scaffold and wing domains of SecA"/>
    <property type="match status" value="1"/>
</dbReference>
<dbReference type="Gene3D" id="3.40.50.300">
    <property type="entry name" value="P-loop containing nucleotide triphosphate hydrolases"/>
    <property type="match status" value="2"/>
</dbReference>
<dbReference type="Gene3D" id="3.90.1440.10">
    <property type="entry name" value="SecA, preprotein cross-linking domain"/>
    <property type="match status" value="1"/>
</dbReference>
<dbReference type="HAMAP" id="MF_01382">
    <property type="entry name" value="SecA"/>
    <property type="match status" value="1"/>
</dbReference>
<dbReference type="InterPro" id="IPR014001">
    <property type="entry name" value="Helicase_ATP-bd"/>
</dbReference>
<dbReference type="InterPro" id="IPR001650">
    <property type="entry name" value="Helicase_C-like"/>
</dbReference>
<dbReference type="InterPro" id="IPR027417">
    <property type="entry name" value="P-loop_NTPase"/>
</dbReference>
<dbReference type="InterPro" id="IPR004027">
    <property type="entry name" value="SEC_C_motif"/>
</dbReference>
<dbReference type="InterPro" id="IPR000185">
    <property type="entry name" value="SecA"/>
</dbReference>
<dbReference type="InterPro" id="IPR020937">
    <property type="entry name" value="SecA_CS"/>
</dbReference>
<dbReference type="InterPro" id="IPR011115">
    <property type="entry name" value="SecA_DEAD"/>
</dbReference>
<dbReference type="InterPro" id="IPR014018">
    <property type="entry name" value="SecA_motor_DEAD"/>
</dbReference>
<dbReference type="InterPro" id="IPR011130">
    <property type="entry name" value="SecA_preprotein_X-link_dom"/>
</dbReference>
<dbReference type="InterPro" id="IPR044722">
    <property type="entry name" value="SecA_SF2_C"/>
</dbReference>
<dbReference type="InterPro" id="IPR011116">
    <property type="entry name" value="SecA_Wing/Scaffold"/>
</dbReference>
<dbReference type="InterPro" id="IPR036266">
    <property type="entry name" value="SecA_Wing/Scaffold_sf"/>
</dbReference>
<dbReference type="InterPro" id="IPR036670">
    <property type="entry name" value="SecA_X-link_sf"/>
</dbReference>
<dbReference type="NCBIfam" id="NF006630">
    <property type="entry name" value="PRK09200.1"/>
    <property type="match status" value="1"/>
</dbReference>
<dbReference type="NCBIfam" id="TIGR00963">
    <property type="entry name" value="secA"/>
    <property type="match status" value="1"/>
</dbReference>
<dbReference type="PANTHER" id="PTHR30612:SF0">
    <property type="entry name" value="CHLOROPLAST PROTEIN-TRANSPORTING ATPASE"/>
    <property type="match status" value="1"/>
</dbReference>
<dbReference type="PANTHER" id="PTHR30612">
    <property type="entry name" value="SECA INNER MEMBRANE COMPONENT OF SEC PROTEIN SECRETION SYSTEM"/>
    <property type="match status" value="1"/>
</dbReference>
<dbReference type="Pfam" id="PF21090">
    <property type="entry name" value="P-loop_SecA"/>
    <property type="match status" value="1"/>
</dbReference>
<dbReference type="Pfam" id="PF02810">
    <property type="entry name" value="SEC-C"/>
    <property type="match status" value="1"/>
</dbReference>
<dbReference type="Pfam" id="PF07517">
    <property type="entry name" value="SecA_DEAD"/>
    <property type="match status" value="1"/>
</dbReference>
<dbReference type="Pfam" id="PF01043">
    <property type="entry name" value="SecA_PP_bind"/>
    <property type="match status" value="1"/>
</dbReference>
<dbReference type="Pfam" id="PF07516">
    <property type="entry name" value="SecA_SW"/>
    <property type="match status" value="1"/>
</dbReference>
<dbReference type="PRINTS" id="PR00906">
    <property type="entry name" value="SECA"/>
</dbReference>
<dbReference type="SMART" id="SM00957">
    <property type="entry name" value="SecA_DEAD"/>
    <property type="match status" value="1"/>
</dbReference>
<dbReference type="SMART" id="SM00958">
    <property type="entry name" value="SecA_PP_bind"/>
    <property type="match status" value="1"/>
</dbReference>
<dbReference type="SUPFAM" id="SSF81886">
    <property type="entry name" value="Helical scaffold and wing domains of SecA"/>
    <property type="match status" value="1"/>
</dbReference>
<dbReference type="SUPFAM" id="SSF52540">
    <property type="entry name" value="P-loop containing nucleoside triphosphate hydrolases"/>
    <property type="match status" value="2"/>
</dbReference>
<dbReference type="SUPFAM" id="SSF81767">
    <property type="entry name" value="Pre-protein crosslinking domain of SecA"/>
    <property type="match status" value="1"/>
</dbReference>
<dbReference type="PROSITE" id="PS01312">
    <property type="entry name" value="SECA"/>
    <property type="match status" value="1"/>
</dbReference>
<dbReference type="PROSITE" id="PS51196">
    <property type="entry name" value="SECA_MOTOR_DEAD"/>
    <property type="match status" value="1"/>
</dbReference>
<feature type="chain" id="PRO_0000109604" description="Protein translocase subunit SecA 1">
    <location>
        <begin position="1"/>
        <end position="843"/>
    </location>
</feature>
<feature type="region of interest" description="Disordered" evidence="2">
    <location>
        <begin position="799"/>
        <end position="826"/>
    </location>
</feature>
<feature type="compositionally biased region" description="Basic and acidic residues" evidence="2">
    <location>
        <begin position="799"/>
        <end position="813"/>
    </location>
</feature>
<feature type="binding site" evidence="1">
    <location>
        <position position="91"/>
    </location>
    <ligand>
        <name>ATP</name>
        <dbReference type="ChEBI" id="CHEBI:30616"/>
    </ligand>
</feature>
<feature type="binding site" evidence="1">
    <location>
        <begin position="109"/>
        <end position="113"/>
    </location>
    <ligand>
        <name>ATP</name>
        <dbReference type="ChEBI" id="CHEBI:30616"/>
    </ligand>
</feature>
<feature type="binding site" evidence="1">
    <location>
        <position position="498"/>
    </location>
    <ligand>
        <name>ATP</name>
        <dbReference type="ChEBI" id="CHEBI:30616"/>
    </ligand>
</feature>
<feature type="binding site" evidence="1">
    <location>
        <position position="829"/>
    </location>
    <ligand>
        <name>Zn(2+)</name>
        <dbReference type="ChEBI" id="CHEBI:29105"/>
    </ligand>
</feature>
<feature type="binding site" evidence="1">
    <location>
        <position position="831"/>
    </location>
    <ligand>
        <name>Zn(2+)</name>
        <dbReference type="ChEBI" id="CHEBI:29105"/>
    </ligand>
</feature>
<feature type="binding site" evidence="1">
    <location>
        <position position="840"/>
    </location>
    <ligand>
        <name>Zn(2+)</name>
        <dbReference type="ChEBI" id="CHEBI:29105"/>
    </ligand>
</feature>
<feature type="binding site" evidence="1">
    <location>
        <position position="841"/>
    </location>
    <ligand>
        <name>Zn(2+)</name>
        <dbReference type="ChEBI" id="CHEBI:29105"/>
    </ligand>
</feature>
<accession>Q7A6R5</accession>
<organism>
    <name type="scientific">Staphylococcus aureus (strain N315)</name>
    <dbReference type="NCBI Taxonomy" id="158879"/>
    <lineage>
        <taxon>Bacteria</taxon>
        <taxon>Bacillati</taxon>
        <taxon>Bacillota</taxon>
        <taxon>Bacilli</taxon>
        <taxon>Bacillales</taxon>
        <taxon>Staphylococcaceae</taxon>
        <taxon>Staphylococcus</taxon>
    </lineage>
</organism>
<protein>
    <recommendedName>
        <fullName evidence="1">Protein translocase subunit SecA 1</fullName>
        <ecNumber evidence="1">7.4.2.8</ecNumber>
    </recommendedName>
</protein>
<comment type="function">
    <text evidence="1">Part of the Sec protein translocase complex. Interacts with the SecYEG preprotein conducting channel. Has a central role in coupling the hydrolysis of ATP to the transfer of proteins into and across the cell membrane, serving as an ATP-driven molecular motor driving the stepwise translocation of polypeptide chains across the membrane.</text>
</comment>
<comment type="catalytic activity">
    <reaction evidence="1">
        <text>ATP + H2O + cellular proteinSide 1 = ADP + phosphate + cellular proteinSide 2.</text>
        <dbReference type="EC" id="7.4.2.8"/>
    </reaction>
</comment>
<comment type="cofactor">
    <cofactor evidence="1">
        <name>Zn(2+)</name>
        <dbReference type="ChEBI" id="CHEBI:29105"/>
    </cofactor>
    <text evidence="1">May bind 1 zinc ion per subunit.</text>
</comment>
<comment type="subunit">
    <text evidence="1">Monomer and homodimer. Part of the essential Sec protein translocation apparatus which comprises SecA, SecYEG and auxiliary proteins SecDF. Other proteins may also be involved.</text>
</comment>
<comment type="subcellular location">
    <subcellularLocation>
        <location evidence="1">Cell membrane</location>
        <topology evidence="1">Peripheral membrane protein</topology>
        <orientation evidence="1">Cytoplasmic side</orientation>
    </subcellularLocation>
    <subcellularLocation>
        <location evidence="1">Cytoplasm</location>
    </subcellularLocation>
    <text evidence="1">Distribution is 50-50.</text>
</comment>
<comment type="similarity">
    <text evidence="1">Belongs to the SecA family.</text>
</comment>
<reference key="1">
    <citation type="journal article" date="2001" name="Lancet">
        <title>Whole genome sequencing of meticillin-resistant Staphylococcus aureus.</title>
        <authorList>
            <person name="Kuroda M."/>
            <person name="Ohta T."/>
            <person name="Uchiyama I."/>
            <person name="Baba T."/>
            <person name="Yuzawa H."/>
            <person name="Kobayashi I."/>
            <person name="Cui L."/>
            <person name="Oguchi A."/>
            <person name="Aoki K."/>
            <person name="Nagai Y."/>
            <person name="Lian J.-Q."/>
            <person name="Ito T."/>
            <person name="Kanamori M."/>
            <person name="Matsumaru H."/>
            <person name="Maruyama A."/>
            <person name="Murakami H."/>
            <person name="Hosoyama A."/>
            <person name="Mizutani-Ui Y."/>
            <person name="Takahashi N.K."/>
            <person name="Sawano T."/>
            <person name="Inoue R."/>
            <person name="Kaito C."/>
            <person name="Sekimizu K."/>
            <person name="Hirakawa H."/>
            <person name="Kuhara S."/>
            <person name="Goto S."/>
            <person name="Yabuzaki J."/>
            <person name="Kanehisa M."/>
            <person name="Yamashita A."/>
            <person name="Oshima K."/>
            <person name="Furuya K."/>
            <person name="Yoshino C."/>
            <person name="Shiba T."/>
            <person name="Hattori M."/>
            <person name="Ogasawara N."/>
            <person name="Hayashi H."/>
            <person name="Hiramatsu K."/>
        </authorList>
    </citation>
    <scope>NUCLEOTIDE SEQUENCE [LARGE SCALE GENOMIC DNA]</scope>
    <source>
        <strain>N315</strain>
    </source>
</reference>
<reference key="2">
    <citation type="submission" date="2007-10" db="UniProtKB">
        <title>Shotgun proteomic analysis of total and membrane protein extracts of S. aureus strain N315.</title>
        <authorList>
            <person name="Vaezzadeh A.R."/>
            <person name="Deshusses J."/>
            <person name="Lescuyer P."/>
            <person name="Hochstrasser D.F."/>
        </authorList>
    </citation>
    <scope>IDENTIFICATION BY MASS SPECTROMETRY [LARGE SCALE ANALYSIS]</scope>
    <source>
        <strain>N315</strain>
    </source>
</reference>
<sequence>MGFLSKILDGNNKEIKQLGKLADKVIALEEKTAILTDEEIRNKTKQFQTELADIDNVKKQNDYLDKILPEAYALVREGSKRVFNMTPYKVQIMGGIAIHKGDIAEMRTGEGKTLTATMPTYLNALAGRGVHVITVNEYLSSVQSEEMAELYNFLGLTVGLNLNSKTTEEKREAYAQDITYSTNNELGFDYLRDNMVNYSEDRVMRPLHFAIIDEVDSILIDEARTPLIISGEAEKSTSLYTQANVFAKMLKQDEDYKYDEKTKAVHLTEQGADKAERMFKVENLYDVQNVDVISHINTALRAHVTLQRDVDYMVVDGEVLIVDQFTGRTMPGRRFSEGLHQAIEAKEGVQIQNESKTMASITFQNYFRMYNKLAGMTGTAKTEEEEFRNIYNMTVTQIPTNKPVQRNDKSDLIYISQKGKFDAVVEDVVEKHKAGQPVLLGTVAVETSEYISNLLKKRGIRHDVLNAKNHEREAEIVAGAGQKGAVTIATNMAGRGTDIKLGEGVEELGGLAVIGTERHESRRIDDQLRGRSGRQGDKGDSRFYLSLQDELMIRFGSERLQKMMSRLGLDDSTPIESKMVSRAVESAQKRVEGNNFDARKRILEYDEVLRKQREIIYNERNSIIDEEDSSQVVDAMLRSTLQRSINYYINTADDEPEYQPFIDYINDIFLQEGDITEDDIKGKDAEDIFEVVWAKIEAAYQSQKDILEEQMNEFERMILLRSIDSHWTDHIDTMDQLRQGIHLRSYAQQNPLRDYQNEGHELFDIMMQNIEEDTCKFILKSVVQVEDNIEREKTTEFGEAKHVSAEDGKEKVKPKPIVKGDQVGRNDDCPCGSGKKFKNCHGK</sequence>
<name>SECA1_STAAN</name>